<evidence type="ECO:0000255" key="1">
    <source>
        <dbReference type="HAMAP-Rule" id="MF_01522"/>
    </source>
</evidence>
<name>KUP_PSEPK</name>
<protein>
    <recommendedName>
        <fullName evidence="1">Probable potassium transport system protein Kup</fullName>
    </recommendedName>
</protein>
<comment type="function">
    <text evidence="1">Transport of potassium into the cell. Likely operates as a K(+):H(+) symporter.</text>
</comment>
<comment type="catalytic activity">
    <reaction evidence="1">
        <text>K(+)(in) + H(+)(in) = K(+)(out) + H(+)(out)</text>
        <dbReference type="Rhea" id="RHEA:28490"/>
        <dbReference type="ChEBI" id="CHEBI:15378"/>
        <dbReference type="ChEBI" id="CHEBI:29103"/>
    </reaction>
    <physiologicalReaction direction="right-to-left" evidence="1">
        <dbReference type="Rhea" id="RHEA:28492"/>
    </physiologicalReaction>
</comment>
<comment type="subcellular location">
    <subcellularLocation>
        <location evidence="1">Cell inner membrane</location>
        <topology evidence="1">Multi-pass membrane protein</topology>
    </subcellularLocation>
</comment>
<comment type="similarity">
    <text evidence="1">Belongs to the HAK/KUP transporter (TC 2.A.72) family.</text>
</comment>
<sequence length="636" mass="68569">MVQASSHAESGHEGKQGASRSVGLLVAAVGVVYGDIGTSPLYTLKEVFTGGYGVSVNHDGVLGILSLILWSLLWVVSFKYVMFILRADNQGEGGTMALTALARRATAAYPRLRTLMVICGLIGASLFYGDSMITPAVSVLSAVEGVGLAFDGIDHWVVPISLVVLVALFLVQRHGTEKIGKLFGPIMVTWFLALGALGVHGISQSPEVLKAFNPAWAVNFFVVHPGIGVAILGAVVLALTGAEALYADMGHFGRKPIARAWFILVLPALVLNYFGQGALLLQNPEAARNPFYLLAPGWALLPLVGLATMATVIASQAVISGAFSLTRQAIQLGYIPRMQIQHTSSDEQGQIYIGAVNWTLMVGVVLLVIGFESSGALAAAYGVAVTGTMLITTVLVSAVMLLLWKWPPLLAVPILVGFLLVDGLFFAANVPKIAQGGAFPVLAGGVLYLLMSTWKRGKQILVERIDEGALPLPLFISSIRIQPPHRVEGTAVFLTARSDAVPHALLHNMLHNQVLHSQVVLLTVVSEDRPRVPEHERFEVEAYGDGFFRVLLHFGFMDEPDVPAALKLCHLDGLDFTPMRTTYFLSRETVIASRLEGMSRWRGNLFAFLLKNANGNLRFFNLPLNRVIELGTQVEI</sequence>
<feature type="chain" id="PRO_0000209042" description="Probable potassium transport system protein Kup">
    <location>
        <begin position="1"/>
        <end position="636"/>
    </location>
</feature>
<feature type="transmembrane region" description="Helical" evidence="1">
    <location>
        <begin position="22"/>
        <end position="42"/>
    </location>
</feature>
<feature type="transmembrane region" description="Helical" evidence="1">
    <location>
        <begin position="64"/>
        <end position="84"/>
    </location>
</feature>
<feature type="transmembrane region" description="Helical" evidence="1">
    <location>
        <begin position="115"/>
        <end position="135"/>
    </location>
</feature>
<feature type="transmembrane region" description="Helical" evidence="1">
    <location>
        <begin position="150"/>
        <end position="170"/>
    </location>
</feature>
<feature type="transmembrane region" description="Helical" evidence="1">
    <location>
        <begin position="182"/>
        <end position="202"/>
    </location>
</feature>
<feature type="transmembrane region" description="Helical" evidence="1">
    <location>
        <begin position="220"/>
        <end position="240"/>
    </location>
</feature>
<feature type="transmembrane region" description="Helical" evidence="1">
    <location>
        <begin position="261"/>
        <end position="281"/>
    </location>
</feature>
<feature type="transmembrane region" description="Helical" evidence="1">
    <location>
        <begin position="293"/>
        <end position="313"/>
    </location>
</feature>
<feature type="transmembrane region" description="Helical" evidence="1">
    <location>
        <begin position="351"/>
        <end position="371"/>
    </location>
</feature>
<feature type="transmembrane region" description="Helical" evidence="1">
    <location>
        <begin position="383"/>
        <end position="403"/>
    </location>
</feature>
<feature type="transmembrane region" description="Helical" evidence="1">
    <location>
        <begin position="408"/>
        <end position="428"/>
    </location>
</feature>
<feature type="transmembrane region" description="Helical" evidence="1">
    <location>
        <begin position="433"/>
        <end position="453"/>
    </location>
</feature>
<dbReference type="EMBL" id="AE015451">
    <property type="protein sequence ID" value="AAN66824.1"/>
    <property type="molecule type" value="Genomic_DNA"/>
</dbReference>
<dbReference type="RefSeq" id="NP_743360.1">
    <property type="nucleotide sequence ID" value="NC_002947.4"/>
</dbReference>
<dbReference type="RefSeq" id="WP_010952353.1">
    <property type="nucleotide sequence ID" value="NZ_CP169744.1"/>
</dbReference>
<dbReference type="STRING" id="160488.PP_1200"/>
<dbReference type="PaxDb" id="160488-PP_1200"/>
<dbReference type="KEGG" id="ppu:PP_1200"/>
<dbReference type="PATRIC" id="fig|160488.4.peg.1274"/>
<dbReference type="eggNOG" id="COG3158">
    <property type="taxonomic scope" value="Bacteria"/>
</dbReference>
<dbReference type="HOGENOM" id="CLU_008142_4_2_6"/>
<dbReference type="OrthoDB" id="9805577at2"/>
<dbReference type="PhylomeDB" id="Q88NK7"/>
<dbReference type="BioCyc" id="PPUT160488:G1G01-1282-MONOMER"/>
<dbReference type="Proteomes" id="UP000000556">
    <property type="component" value="Chromosome"/>
</dbReference>
<dbReference type="GO" id="GO:0005886">
    <property type="term" value="C:plasma membrane"/>
    <property type="evidence" value="ECO:0007669"/>
    <property type="project" value="UniProtKB-SubCell"/>
</dbReference>
<dbReference type="GO" id="GO:0015079">
    <property type="term" value="F:potassium ion transmembrane transporter activity"/>
    <property type="evidence" value="ECO:0007669"/>
    <property type="project" value="UniProtKB-UniRule"/>
</dbReference>
<dbReference type="GO" id="GO:0015293">
    <property type="term" value="F:symporter activity"/>
    <property type="evidence" value="ECO:0007669"/>
    <property type="project" value="UniProtKB-UniRule"/>
</dbReference>
<dbReference type="HAMAP" id="MF_01522">
    <property type="entry name" value="Kup"/>
    <property type="match status" value="1"/>
</dbReference>
<dbReference type="InterPro" id="IPR003855">
    <property type="entry name" value="K+_transporter"/>
</dbReference>
<dbReference type="InterPro" id="IPR053952">
    <property type="entry name" value="K_trans_C"/>
</dbReference>
<dbReference type="InterPro" id="IPR053951">
    <property type="entry name" value="K_trans_N"/>
</dbReference>
<dbReference type="InterPro" id="IPR023051">
    <property type="entry name" value="Kup"/>
</dbReference>
<dbReference type="PANTHER" id="PTHR30540:SF79">
    <property type="entry name" value="LOW AFFINITY POTASSIUM TRANSPORT SYSTEM PROTEIN KUP"/>
    <property type="match status" value="1"/>
</dbReference>
<dbReference type="PANTHER" id="PTHR30540">
    <property type="entry name" value="OSMOTIC STRESS POTASSIUM TRANSPORTER"/>
    <property type="match status" value="1"/>
</dbReference>
<dbReference type="Pfam" id="PF02705">
    <property type="entry name" value="K_trans"/>
    <property type="match status" value="1"/>
</dbReference>
<dbReference type="Pfam" id="PF22776">
    <property type="entry name" value="K_trans_C"/>
    <property type="match status" value="1"/>
</dbReference>
<proteinExistence type="inferred from homology"/>
<gene>
    <name evidence="1" type="primary">kup</name>
    <name type="ordered locus">PP_1200</name>
</gene>
<keyword id="KW-0997">Cell inner membrane</keyword>
<keyword id="KW-1003">Cell membrane</keyword>
<keyword id="KW-0406">Ion transport</keyword>
<keyword id="KW-0472">Membrane</keyword>
<keyword id="KW-0630">Potassium</keyword>
<keyword id="KW-0633">Potassium transport</keyword>
<keyword id="KW-1185">Reference proteome</keyword>
<keyword id="KW-0769">Symport</keyword>
<keyword id="KW-0812">Transmembrane</keyword>
<keyword id="KW-1133">Transmembrane helix</keyword>
<keyword id="KW-0813">Transport</keyword>
<organism>
    <name type="scientific">Pseudomonas putida (strain ATCC 47054 / DSM 6125 / CFBP 8728 / NCIMB 11950 / KT2440)</name>
    <dbReference type="NCBI Taxonomy" id="160488"/>
    <lineage>
        <taxon>Bacteria</taxon>
        <taxon>Pseudomonadati</taxon>
        <taxon>Pseudomonadota</taxon>
        <taxon>Gammaproteobacteria</taxon>
        <taxon>Pseudomonadales</taxon>
        <taxon>Pseudomonadaceae</taxon>
        <taxon>Pseudomonas</taxon>
    </lineage>
</organism>
<reference key="1">
    <citation type="journal article" date="2002" name="Environ. Microbiol.">
        <title>Complete genome sequence and comparative analysis of the metabolically versatile Pseudomonas putida KT2440.</title>
        <authorList>
            <person name="Nelson K.E."/>
            <person name="Weinel C."/>
            <person name="Paulsen I.T."/>
            <person name="Dodson R.J."/>
            <person name="Hilbert H."/>
            <person name="Martins dos Santos V.A.P."/>
            <person name="Fouts D.E."/>
            <person name="Gill S.R."/>
            <person name="Pop M."/>
            <person name="Holmes M."/>
            <person name="Brinkac L.M."/>
            <person name="Beanan M.J."/>
            <person name="DeBoy R.T."/>
            <person name="Daugherty S.C."/>
            <person name="Kolonay J.F."/>
            <person name="Madupu R."/>
            <person name="Nelson W.C."/>
            <person name="White O."/>
            <person name="Peterson J.D."/>
            <person name="Khouri H.M."/>
            <person name="Hance I."/>
            <person name="Chris Lee P."/>
            <person name="Holtzapple E.K."/>
            <person name="Scanlan D."/>
            <person name="Tran K."/>
            <person name="Moazzez A."/>
            <person name="Utterback T.R."/>
            <person name="Rizzo M."/>
            <person name="Lee K."/>
            <person name="Kosack D."/>
            <person name="Moestl D."/>
            <person name="Wedler H."/>
            <person name="Lauber J."/>
            <person name="Stjepandic D."/>
            <person name="Hoheisel J."/>
            <person name="Straetz M."/>
            <person name="Heim S."/>
            <person name="Kiewitz C."/>
            <person name="Eisen J.A."/>
            <person name="Timmis K.N."/>
            <person name="Duesterhoeft A."/>
            <person name="Tuemmler B."/>
            <person name="Fraser C.M."/>
        </authorList>
    </citation>
    <scope>NUCLEOTIDE SEQUENCE [LARGE SCALE GENOMIC DNA]</scope>
    <source>
        <strain>ATCC 47054 / DSM 6125 / CFBP 8728 / NCIMB 11950 / KT2440</strain>
    </source>
</reference>
<accession>Q88NK7</accession>